<protein>
    <recommendedName>
        <fullName evidence="1">DNA-directed RNA polymerase subunit alpha</fullName>
        <shortName evidence="1">RNAP subunit alpha</shortName>
        <ecNumber evidence="1">2.7.7.6</ecNumber>
    </recommendedName>
    <alternativeName>
        <fullName evidence="1">RNA polymerase subunit alpha</fullName>
    </alternativeName>
    <alternativeName>
        <fullName evidence="1">Transcriptase subunit alpha</fullName>
    </alternativeName>
</protein>
<name>RPOA_BRUC2</name>
<reference key="1">
    <citation type="submission" date="2007-10" db="EMBL/GenBank/DDBJ databases">
        <title>Brucella canis ATCC 23365 whole genome shotgun sequencing project.</title>
        <authorList>
            <person name="Setubal J.C."/>
            <person name="Bowns C."/>
            <person name="Boyle S."/>
            <person name="Crasta O.R."/>
            <person name="Czar M.J."/>
            <person name="Dharmanolla C."/>
            <person name="Gillespie J.J."/>
            <person name="Kenyon R.W."/>
            <person name="Lu J."/>
            <person name="Mane S."/>
            <person name="Mohapatra S."/>
            <person name="Nagrani S."/>
            <person name="Purkayastha A."/>
            <person name="Rajasimha H.K."/>
            <person name="Shallom J.M."/>
            <person name="Shallom S."/>
            <person name="Shukla M."/>
            <person name="Snyder E.E."/>
            <person name="Sobral B.W."/>
            <person name="Wattam A.R."/>
            <person name="Will R."/>
            <person name="Williams K."/>
            <person name="Yoo H."/>
            <person name="Bruce D."/>
            <person name="Detter C."/>
            <person name="Munk C."/>
            <person name="Brettin T.S."/>
        </authorList>
    </citation>
    <scope>NUCLEOTIDE SEQUENCE [LARGE SCALE GENOMIC DNA]</scope>
    <source>
        <strain>ATCC 23365 / NCTC 10854 / RM-666</strain>
    </source>
</reference>
<feature type="chain" id="PRO_1000075001" description="DNA-directed RNA polymerase subunit alpha">
    <location>
        <begin position="1"/>
        <end position="337"/>
    </location>
</feature>
<feature type="region of interest" description="Alpha N-terminal domain (alpha-NTD)" evidence="1">
    <location>
        <begin position="1"/>
        <end position="233"/>
    </location>
</feature>
<feature type="region of interest" description="Alpha C-terminal domain (alpha-CTD)" evidence="1">
    <location>
        <begin position="249"/>
        <end position="337"/>
    </location>
</feature>
<proteinExistence type="inferred from homology"/>
<evidence type="ECO:0000255" key="1">
    <source>
        <dbReference type="HAMAP-Rule" id="MF_00059"/>
    </source>
</evidence>
<gene>
    <name evidence="1" type="primary">rpoA</name>
    <name type="ordered locus">BCAN_A1231</name>
</gene>
<accession>A9M5M5</accession>
<dbReference type="EC" id="2.7.7.6" evidence="1"/>
<dbReference type="EMBL" id="CP000872">
    <property type="protein sequence ID" value="ABX62280.1"/>
    <property type="molecule type" value="Genomic_DNA"/>
</dbReference>
<dbReference type="RefSeq" id="WP_006253145.1">
    <property type="nucleotide sequence ID" value="NC_010103.1"/>
</dbReference>
<dbReference type="SMR" id="A9M5M5"/>
<dbReference type="GeneID" id="55590884"/>
<dbReference type="KEGG" id="bcs:BCAN_A1231"/>
<dbReference type="HOGENOM" id="CLU_053084_0_0_5"/>
<dbReference type="PhylomeDB" id="A9M5M5"/>
<dbReference type="PRO" id="PR:A9M5M5"/>
<dbReference type="Proteomes" id="UP000001385">
    <property type="component" value="Chromosome I"/>
</dbReference>
<dbReference type="GO" id="GO:0005737">
    <property type="term" value="C:cytoplasm"/>
    <property type="evidence" value="ECO:0007669"/>
    <property type="project" value="UniProtKB-ARBA"/>
</dbReference>
<dbReference type="GO" id="GO:0000428">
    <property type="term" value="C:DNA-directed RNA polymerase complex"/>
    <property type="evidence" value="ECO:0007669"/>
    <property type="project" value="UniProtKB-KW"/>
</dbReference>
<dbReference type="GO" id="GO:0003677">
    <property type="term" value="F:DNA binding"/>
    <property type="evidence" value="ECO:0007669"/>
    <property type="project" value="UniProtKB-UniRule"/>
</dbReference>
<dbReference type="GO" id="GO:0003899">
    <property type="term" value="F:DNA-directed RNA polymerase activity"/>
    <property type="evidence" value="ECO:0007669"/>
    <property type="project" value="UniProtKB-UniRule"/>
</dbReference>
<dbReference type="GO" id="GO:0046983">
    <property type="term" value="F:protein dimerization activity"/>
    <property type="evidence" value="ECO:0007669"/>
    <property type="project" value="InterPro"/>
</dbReference>
<dbReference type="GO" id="GO:0006351">
    <property type="term" value="P:DNA-templated transcription"/>
    <property type="evidence" value="ECO:0007669"/>
    <property type="project" value="UniProtKB-UniRule"/>
</dbReference>
<dbReference type="CDD" id="cd06928">
    <property type="entry name" value="RNAP_alpha_NTD"/>
    <property type="match status" value="1"/>
</dbReference>
<dbReference type="FunFam" id="1.10.150.20:FF:000001">
    <property type="entry name" value="DNA-directed RNA polymerase subunit alpha"/>
    <property type="match status" value="1"/>
</dbReference>
<dbReference type="FunFam" id="2.170.120.12:FF:000001">
    <property type="entry name" value="DNA-directed RNA polymerase subunit alpha"/>
    <property type="match status" value="1"/>
</dbReference>
<dbReference type="Gene3D" id="1.10.150.20">
    <property type="entry name" value="5' to 3' exonuclease, C-terminal subdomain"/>
    <property type="match status" value="1"/>
</dbReference>
<dbReference type="Gene3D" id="2.170.120.12">
    <property type="entry name" value="DNA-directed RNA polymerase, insert domain"/>
    <property type="match status" value="1"/>
</dbReference>
<dbReference type="Gene3D" id="3.30.1360.10">
    <property type="entry name" value="RNA polymerase, RBP11-like subunit"/>
    <property type="match status" value="1"/>
</dbReference>
<dbReference type="HAMAP" id="MF_00059">
    <property type="entry name" value="RNApol_bact_RpoA"/>
    <property type="match status" value="1"/>
</dbReference>
<dbReference type="InterPro" id="IPR011262">
    <property type="entry name" value="DNA-dir_RNA_pol_insert"/>
</dbReference>
<dbReference type="InterPro" id="IPR011263">
    <property type="entry name" value="DNA-dir_RNA_pol_RpoA/D/Rpb3"/>
</dbReference>
<dbReference type="InterPro" id="IPR011773">
    <property type="entry name" value="DNA-dir_RpoA"/>
</dbReference>
<dbReference type="InterPro" id="IPR036603">
    <property type="entry name" value="RBP11-like"/>
</dbReference>
<dbReference type="InterPro" id="IPR011260">
    <property type="entry name" value="RNAP_asu_C"/>
</dbReference>
<dbReference type="InterPro" id="IPR036643">
    <property type="entry name" value="RNApol_insert_sf"/>
</dbReference>
<dbReference type="NCBIfam" id="NF003513">
    <property type="entry name" value="PRK05182.1-2"/>
    <property type="match status" value="1"/>
</dbReference>
<dbReference type="NCBIfam" id="NF003519">
    <property type="entry name" value="PRK05182.2-5"/>
    <property type="match status" value="1"/>
</dbReference>
<dbReference type="NCBIfam" id="TIGR02027">
    <property type="entry name" value="rpoA"/>
    <property type="match status" value="1"/>
</dbReference>
<dbReference type="Pfam" id="PF01000">
    <property type="entry name" value="RNA_pol_A_bac"/>
    <property type="match status" value="1"/>
</dbReference>
<dbReference type="Pfam" id="PF03118">
    <property type="entry name" value="RNA_pol_A_CTD"/>
    <property type="match status" value="1"/>
</dbReference>
<dbReference type="Pfam" id="PF01193">
    <property type="entry name" value="RNA_pol_L"/>
    <property type="match status" value="1"/>
</dbReference>
<dbReference type="SMART" id="SM00662">
    <property type="entry name" value="RPOLD"/>
    <property type="match status" value="1"/>
</dbReference>
<dbReference type="SUPFAM" id="SSF47789">
    <property type="entry name" value="C-terminal domain of RNA polymerase alpha subunit"/>
    <property type="match status" value="1"/>
</dbReference>
<dbReference type="SUPFAM" id="SSF56553">
    <property type="entry name" value="Insert subdomain of RNA polymerase alpha subunit"/>
    <property type="match status" value="1"/>
</dbReference>
<dbReference type="SUPFAM" id="SSF55257">
    <property type="entry name" value="RBP11-like subunits of RNA polymerase"/>
    <property type="match status" value="1"/>
</dbReference>
<organism>
    <name type="scientific">Brucella canis (strain ATCC 23365 / NCTC 10854 / RM-666)</name>
    <dbReference type="NCBI Taxonomy" id="483179"/>
    <lineage>
        <taxon>Bacteria</taxon>
        <taxon>Pseudomonadati</taxon>
        <taxon>Pseudomonadota</taxon>
        <taxon>Alphaproteobacteria</taxon>
        <taxon>Hyphomicrobiales</taxon>
        <taxon>Brucellaceae</taxon>
        <taxon>Brucella/Ochrobactrum group</taxon>
        <taxon>Brucella</taxon>
    </lineage>
</organism>
<sequence>MIQKNWQELIKPNKVDFITHGSRTHATVVAEPLERGFGLTLGNALRRVLLSSLRGAAVTAVQIDGVLHEFSSIPGVREDVTDIVLNIKEIAIRMEGEGPKRMVVRKEGPGVVTAGDIQTVGDVEILNPEHVICTLDEGAEIRMEFTVNTGKGYVPADRNRAEDAPIGLIPVDSLYSPVRKVSYKIENTREGQVLDYDKLTLNIETNGSVTGEDAVAYAARILQDQLSIFVNFEEPQKEAPQEQVAELAFNPVLLKKVDELELSVRSANCLKTDNIVYIGDLIQKTEAEMLRTPNFGRKSLNEIKEVLASMGLHLGMEIPAWPPENIEDLAKRYEDQY</sequence>
<keyword id="KW-0240">DNA-directed RNA polymerase</keyword>
<keyword id="KW-0548">Nucleotidyltransferase</keyword>
<keyword id="KW-1185">Reference proteome</keyword>
<keyword id="KW-0804">Transcription</keyword>
<keyword id="KW-0808">Transferase</keyword>
<comment type="function">
    <text evidence="1">DNA-dependent RNA polymerase catalyzes the transcription of DNA into RNA using the four ribonucleoside triphosphates as substrates.</text>
</comment>
<comment type="catalytic activity">
    <reaction evidence="1">
        <text>RNA(n) + a ribonucleoside 5'-triphosphate = RNA(n+1) + diphosphate</text>
        <dbReference type="Rhea" id="RHEA:21248"/>
        <dbReference type="Rhea" id="RHEA-COMP:14527"/>
        <dbReference type="Rhea" id="RHEA-COMP:17342"/>
        <dbReference type="ChEBI" id="CHEBI:33019"/>
        <dbReference type="ChEBI" id="CHEBI:61557"/>
        <dbReference type="ChEBI" id="CHEBI:140395"/>
        <dbReference type="EC" id="2.7.7.6"/>
    </reaction>
</comment>
<comment type="subunit">
    <text evidence="1">Homodimer. The RNAP catalytic core consists of 2 alpha, 1 beta, 1 beta' and 1 omega subunit. When a sigma factor is associated with the core the holoenzyme is formed, which can initiate transcription.</text>
</comment>
<comment type="domain">
    <text evidence="1">The N-terminal domain is essential for RNAP assembly and basal transcription, whereas the C-terminal domain is involved in interaction with transcriptional regulators and with upstream promoter elements.</text>
</comment>
<comment type="similarity">
    <text evidence="1">Belongs to the RNA polymerase alpha chain family.</text>
</comment>